<reference key="1">
    <citation type="journal article" date="2014" name="Toxicon">
        <title>Lebecin, a new C-type lectin like protein from Macrovipera lebetina venom with anti-tumor activity against the breast cancer cell line MDA-MB231.</title>
        <authorList>
            <person name="Jebali J."/>
            <person name="Fakhfekh E."/>
            <person name="Morgen M."/>
            <person name="Srairi-Abid N."/>
            <person name="Majdoub H."/>
            <person name="Gargouri A."/>
            <person name="El Ayeb M."/>
            <person name="Luis J."/>
            <person name="Marrakchi N."/>
            <person name="Sarray S."/>
        </authorList>
    </citation>
    <scope>NUCLEOTIDE SEQUENCE [MRNA]</scope>
    <scope>PROTEIN SEQUENCE OF 24-56</scope>
    <scope>FUNCTION</scope>
    <scope>SUBUNIT</scope>
    <scope>MASS SPECTROMETRY</scope>
    <scope>SUBCELLULAR LOCATION</scope>
    <scope>3D-STRUCTURE MODELING</scope>
    <source>
        <tissue>Venom</tissue>
        <tissue>Venom gland</tissue>
    </source>
</reference>
<organism>
    <name type="scientific">Macrovipera lebetinus</name>
    <name type="common">Levantine viper</name>
    <name type="synonym">Vipera lebetina</name>
    <dbReference type="NCBI Taxonomy" id="3148341"/>
    <lineage>
        <taxon>Eukaryota</taxon>
        <taxon>Metazoa</taxon>
        <taxon>Chordata</taxon>
        <taxon>Craniata</taxon>
        <taxon>Vertebrata</taxon>
        <taxon>Euteleostomi</taxon>
        <taxon>Lepidosauria</taxon>
        <taxon>Squamata</taxon>
        <taxon>Bifurcata</taxon>
        <taxon>Unidentata</taxon>
        <taxon>Episquamata</taxon>
        <taxon>Toxicofera</taxon>
        <taxon>Serpentes</taxon>
        <taxon>Colubroidea</taxon>
        <taxon>Viperidae</taxon>
        <taxon>Viperinae</taxon>
        <taxon>Macrovipera</taxon>
    </lineage>
</organism>
<name>SLCIB_MACLB</name>
<keyword id="KW-0903">Direct protein sequencing</keyword>
<keyword id="KW-1015">Disulfide bond</keyword>
<keyword id="KW-0325">Glycoprotein</keyword>
<keyword id="KW-0964">Secreted</keyword>
<keyword id="KW-0732">Signal</keyword>
<proteinExistence type="evidence at protein level"/>
<dbReference type="EMBL" id="KF836492">
    <property type="protein sequence ID" value="AHI10993.1"/>
    <property type="molecule type" value="mRNA"/>
</dbReference>
<dbReference type="SMR" id="W5XCJ6"/>
<dbReference type="GO" id="GO:0005576">
    <property type="term" value="C:extracellular region"/>
    <property type="evidence" value="ECO:0007669"/>
    <property type="project" value="UniProtKB-SubCell"/>
</dbReference>
<dbReference type="FunFam" id="3.10.100.10:FF:000087">
    <property type="entry name" value="Snaclec rhodocetin subunit delta"/>
    <property type="match status" value="1"/>
</dbReference>
<dbReference type="Gene3D" id="3.10.100.10">
    <property type="entry name" value="Mannose-Binding Protein A, subunit A"/>
    <property type="match status" value="1"/>
</dbReference>
<dbReference type="InterPro" id="IPR001304">
    <property type="entry name" value="C-type_lectin-like"/>
</dbReference>
<dbReference type="InterPro" id="IPR016186">
    <property type="entry name" value="C-type_lectin-like/link_sf"/>
</dbReference>
<dbReference type="InterPro" id="IPR050111">
    <property type="entry name" value="C-type_lectin/snaclec_domain"/>
</dbReference>
<dbReference type="InterPro" id="IPR018378">
    <property type="entry name" value="C-type_lectin_CS"/>
</dbReference>
<dbReference type="InterPro" id="IPR016187">
    <property type="entry name" value="CTDL_fold"/>
</dbReference>
<dbReference type="PANTHER" id="PTHR22803">
    <property type="entry name" value="MANNOSE, PHOSPHOLIPASE, LECTIN RECEPTOR RELATED"/>
    <property type="match status" value="1"/>
</dbReference>
<dbReference type="Pfam" id="PF00059">
    <property type="entry name" value="Lectin_C"/>
    <property type="match status" value="1"/>
</dbReference>
<dbReference type="PRINTS" id="PR01504">
    <property type="entry name" value="PNCREATITSAP"/>
</dbReference>
<dbReference type="SMART" id="SM00034">
    <property type="entry name" value="CLECT"/>
    <property type="match status" value="1"/>
</dbReference>
<dbReference type="SUPFAM" id="SSF56436">
    <property type="entry name" value="C-type lectin-like"/>
    <property type="match status" value="1"/>
</dbReference>
<dbReference type="PROSITE" id="PS00615">
    <property type="entry name" value="C_TYPE_LECTIN_1"/>
    <property type="match status" value="1"/>
</dbReference>
<dbReference type="PROSITE" id="PS50041">
    <property type="entry name" value="C_TYPE_LECTIN_2"/>
    <property type="match status" value="1"/>
</dbReference>
<comment type="function">
    <text evidence="3">Inhibits human breast cancer cells (MDA-MB231) migration and proliferation, as well as their adhesion to fibrinogen and fibronectin. This inhibition may be due to the binding to receptors of the integrin family, probably alpha-v/beta-3 (ITGAV/ITGB3) (40% inhibition of cell adhesion) and alpha-5/beta-1 (ITGA5/ITGB1) (by comparison with lebectin).</text>
</comment>
<comment type="subunit">
    <text evidence="3">Heterodimer with the alpha subunit (AC W5XDM0); disulfide-linked.</text>
</comment>
<comment type="subcellular location">
    <subcellularLocation>
        <location evidence="3">Secreted</location>
    </subcellularLocation>
</comment>
<comment type="tissue specificity">
    <text evidence="6">Expressed by the venom gland.</text>
</comment>
<comment type="mass spectrometry" mass="16064.37" method="MALDI" evidence="3"/>
<comment type="similarity">
    <text evidence="5">Belongs to the snaclec family.</text>
</comment>
<accession>W5XCJ6</accession>
<evidence type="ECO:0000255" key="1"/>
<evidence type="ECO:0000255" key="2">
    <source>
        <dbReference type="PROSITE-ProRule" id="PRU00040"/>
    </source>
</evidence>
<evidence type="ECO:0000269" key="3">
    <source>
    </source>
</evidence>
<evidence type="ECO:0000303" key="4">
    <source>
    </source>
</evidence>
<evidence type="ECO:0000305" key="5"/>
<evidence type="ECO:0000305" key="6">
    <source>
    </source>
</evidence>
<sequence length="154" mass="17553">MGRIIFVSFGLLVVFLSLSGTGADCPSDWSSDEEHCYYVFFLLFTWEEAAKFCTQQANGGHLVSIESVEEAEFVAQLISENIKTSADYVWIGLWNQRKAPYCVSKWTDGSSVIYKNVIERFIKNCFGLEKETNYRTWFNLSCGDDYPFVCKSPA</sequence>
<feature type="signal peptide" evidence="3">
    <location>
        <begin position="1"/>
        <end position="23"/>
    </location>
</feature>
<feature type="chain" id="PRO_0000430179" description="Snaclec lebecin subunit beta">
    <location>
        <begin position="24"/>
        <end position="154"/>
    </location>
</feature>
<feature type="domain" description="C-type lectin" evidence="2">
    <location>
        <begin position="32"/>
        <end position="151"/>
    </location>
</feature>
<feature type="glycosylation site" description="N-linked (GlcNAc...) asparagine" evidence="1">
    <location>
        <position position="139"/>
    </location>
</feature>
<feature type="disulfide bond" evidence="2">
    <location>
        <begin position="25"/>
        <end position="36"/>
    </location>
</feature>
<feature type="disulfide bond" evidence="2">
    <location>
        <begin position="53"/>
        <end position="150"/>
    </location>
</feature>
<feature type="disulfide bond" description="Interchain (with C-101 in subunit alpha)" evidence="2">
    <location>
        <position position="102"/>
    </location>
</feature>
<feature type="disulfide bond" evidence="2">
    <location>
        <begin position="125"/>
        <end position="142"/>
    </location>
</feature>
<protein>
    <recommendedName>
        <fullName evidence="4">Snaclec lebecin subunit beta</fullName>
    </recommendedName>
</protein>